<reference key="1">
    <citation type="journal article" date="2016" name="Stand. Genomic Sci.">
        <title>Complete genome sequence of the Antarctic Halorubrum lacusprofundi type strain ACAM 34.</title>
        <authorList>
            <person name="Anderson I.J."/>
            <person name="DasSarma P."/>
            <person name="Lucas S."/>
            <person name="Copeland A."/>
            <person name="Lapidus A."/>
            <person name="Del Rio T.G."/>
            <person name="Tice H."/>
            <person name="Dalin E."/>
            <person name="Bruce D.C."/>
            <person name="Goodwin L."/>
            <person name="Pitluck S."/>
            <person name="Sims D."/>
            <person name="Brettin T.S."/>
            <person name="Detter J.C."/>
            <person name="Han C.S."/>
            <person name="Larimer F."/>
            <person name="Hauser L."/>
            <person name="Land M."/>
            <person name="Ivanova N."/>
            <person name="Richardson P."/>
            <person name="Cavicchioli R."/>
            <person name="DasSarma S."/>
            <person name="Woese C.R."/>
            <person name="Kyrpides N.C."/>
        </authorList>
    </citation>
    <scope>NUCLEOTIDE SEQUENCE [LARGE SCALE GENOMIC DNA]</scope>
    <source>
        <strain>ATCC 49239 / DSM 5036 / JCM 8891 / ACAM 34</strain>
    </source>
</reference>
<organism>
    <name type="scientific">Halorubrum lacusprofundi (strain ATCC 49239 / DSM 5036 / JCM 8891 / ACAM 34)</name>
    <dbReference type="NCBI Taxonomy" id="416348"/>
    <lineage>
        <taxon>Archaea</taxon>
        <taxon>Methanobacteriati</taxon>
        <taxon>Methanobacteriota</taxon>
        <taxon>Stenosarchaea group</taxon>
        <taxon>Halobacteria</taxon>
        <taxon>Halobacteriales</taxon>
        <taxon>Haloferacaceae</taxon>
        <taxon>Halorubrum</taxon>
    </lineage>
</organism>
<protein>
    <recommendedName>
        <fullName evidence="1">Ribonuclease Z</fullName>
        <shortName evidence="1">RNase Z</shortName>
        <ecNumber evidence="1">3.1.26.11</ecNumber>
    </recommendedName>
    <alternativeName>
        <fullName evidence="1">tRNA 3 endonuclease</fullName>
    </alternativeName>
    <alternativeName>
        <fullName evidence="1">tRNase Z</fullName>
    </alternativeName>
</protein>
<evidence type="ECO:0000255" key="1">
    <source>
        <dbReference type="HAMAP-Rule" id="MF_01818"/>
    </source>
</evidence>
<evidence type="ECO:0000256" key="2">
    <source>
        <dbReference type="SAM" id="MobiDB-lite"/>
    </source>
</evidence>
<proteinExistence type="inferred from homology"/>
<comment type="function">
    <text evidence="1">Zinc phosphodiesterase, which displays some tRNA 3'-processing endonuclease activity. Probably involved in tRNA maturation, by removing a 3'-trailer from precursor tRNA.</text>
</comment>
<comment type="catalytic activity">
    <reaction evidence="1">
        <text>Endonucleolytic cleavage of RNA, removing extra 3' nucleotides from tRNA precursor, generating 3' termini of tRNAs. A 3'-hydroxy group is left at the tRNA terminus and a 5'-phosphoryl group is left at the trailer molecule.</text>
        <dbReference type="EC" id="3.1.26.11"/>
    </reaction>
</comment>
<comment type="cofactor">
    <cofactor evidence="1">
        <name>Zn(2+)</name>
        <dbReference type="ChEBI" id="CHEBI:29105"/>
    </cofactor>
    <text evidence="1">Binds 2 Zn(2+) ions.</text>
</comment>
<comment type="subunit">
    <text evidence="1">Homodimer.</text>
</comment>
<comment type="similarity">
    <text evidence="1">Belongs to the RNase Z family.</text>
</comment>
<keyword id="KW-0255">Endonuclease</keyword>
<keyword id="KW-0378">Hydrolase</keyword>
<keyword id="KW-0479">Metal-binding</keyword>
<keyword id="KW-0540">Nuclease</keyword>
<keyword id="KW-1185">Reference proteome</keyword>
<keyword id="KW-0819">tRNA processing</keyword>
<keyword id="KW-0862">Zinc</keyword>
<sequence>MSLRVTFLGTGGAVPTTERAPSALFVNREGDRLLFDCGEGTQRGMMRFGTGFGIDHLFVSHLHGDHVLGIPGLVQTLGFNDRAEPLTIHCPPGTEDDLHDLVHAVGHDPAFQIRIESVAPGEVALDADGYEVRAFETVHRTKSQGYVLEEDDRPGRFDRPKAEELGVPVGPKFGRLHEGEPVEAEDGSIVEPDQVVGPPRPGRKFVYTADTRPREGTVAVAEDADLLVHDATFADDMEDRARDTAHSTGREAGSVAERAGAKRLALVHISSRYAADASPIRREAREAFDGECLLPDDGDLIEVPFPDADE</sequence>
<feature type="chain" id="PRO_1000187962" description="Ribonuclease Z">
    <location>
        <begin position="1"/>
        <end position="310"/>
    </location>
</feature>
<feature type="region of interest" description="Disordered" evidence="2">
    <location>
        <begin position="150"/>
        <end position="175"/>
    </location>
</feature>
<feature type="compositionally biased region" description="Basic and acidic residues" evidence="2">
    <location>
        <begin position="153"/>
        <end position="164"/>
    </location>
</feature>
<feature type="active site" description="Proton acceptor" evidence="1">
    <location>
        <position position="65"/>
    </location>
</feature>
<feature type="binding site" evidence="1">
    <location>
        <position position="61"/>
    </location>
    <ligand>
        <name>Zn(2+)</name>
        <dbReference type="ChEBI" id="CHEBI:29105"/>
        <label>1</label>
        <note>catalytic</note>
    </ligand>
</feature>
<feature type="binding site" evidence="1">
    <location>
        <position position="63"/>
    </location>
    <ligand>
        <name>Zn(2+)</name>
        <dbReference type="ChEBI" id="CHEBI:29105"/>
        <label>1</label>
        <note>catalytic</note>
    </ligand>
</feature>
<feature type="binding site" evidence="1">
    <location>
        <position position="65"/>
    </location>
    <ligand>
        <name>Zn(2+)</name>
        <dbReference type="ChEBI" id="CHEBI:29105"/>
        <label>2</label>
        <note>catalytic</note>
    </ligand>
</feature>
<feature type="binding site" evidence="1">
    <location>
        <position position="66"/>
    </location>
    <ligand>
        <name>Zn(2+)</name>
        <dbReference type="ChEBI" id="CHEBI:29105"/>
        <label>2</label>
        <note>catalytic</note>
    </ligand>
</feature>
<feature type="binding site" evidence="1">
    <location>
        <position position="139"/>
    </location>
    <ligand>
        <name>Zn(2+)</name>
        <dbReference type="ChEBI" id="CHEBI:29105"/>
        <label>1</label>
        <note>catalytic</note>
    </ligand>
</feature>
<feature type="binding site" evidence="1">
    <location>
        <position position="210"/>
    </location>
    <ligand>
        <name>Zn(2+)</name>
        <dbReference type="ChEBI" id="CHEBI:29105"/>
        <label>1</label>
        <note>catalytic</note>
    </ligand>
</feature>
<feature type="binding site" evidence="1">
    <location>
        <position position="210"/>
    </location>
    <ligand>
        <name>Zn(2+)</name>
        <dbReference type="ChEBI" id="CHEBI:29105"/>
        <label>2</label>
        <note>catalytic</note>
    </ligand>
</feature>
<feature type="binding site" evidence="1">
    <location>
        <position position="268"/>
    </location>
    <ligand>
        <name>Zn(2+)</name>
        <dbReference type="ChEBI" id="CHEBI:29105"/>
        <label>2</label>
        <note>catalytic</note>
    </ligand>
</feature>
<name>RNZ_HALLT</name>
<gene>
    <name evidence="1" type="primary">rnz</name>
    <name type="ordered locus">Hlac_0076</name>
</gene>
<accession>B9LQT0</accession>
<dbReference type="EC" id="3.1.26.11" evidence="1"/>
<dbReference type="EMBL" id="CP001365">
    <property type="protein sequence ID" value="ACM55682.1"/>
    <property type="molecule type" value="Genomic_DNA"/>
</dbReference>
<dbReference type="RefSeq" id="WP_012659326.1">
    <property type="nucleotide sequence ID" value="NC_012029.1"/>
</dbReference>
<dbReference type="SMR" id="B9LQT0"/>
<dbReference type="GeneID" id="7401431"/>
<dbReference type="KEGG" id="hla:Hlac_0076"/>
<dbReference type="eggNOG" id="arCOG00501">
    <property type="taxonomic scope" value="Archaea"/>
</dbReference>
<dbReference type="HOGENOM" id="CLU_031317_2_1_2"/>
<dbReference type="Proteomes" id="UP000000740">
    <property type="component" value="Chromosome 1"/>
</dbReference>
<dbReference type="GO" id="GO:0042781">
    <property type="term" value="F:3'-tRNA processing endoribonuclease activity"/>
    <property type="evidence" value="ECO:0007669"/>
    <property type="project" value="UniProtKB-UniRule"/>
</dbReference>
<dbReference type="GO" id="GO:0008270">
    <property type="term" value="F:zinc ion binding"/>
    <property type="evidence" value="ECO:0007669"/>
    <property type="project" value="UniProtKB-UniRule"/>
</dbReference>
<dbReference type="CDD" id="cd07717">
    <property type="entry name" value="RNaseZ_ZiPD-like_MBL-fold"/>
    <property type="match status" value="1"/>
</dbReference>
<dbReference type="Gene3D" id="3.60.15.10">
    <property type="entry name" value="Ribonuclease Z/Hydroxyacylglutathione hydrolase-like"/>
    <property type="match status" value="1"/>
</dbReference>
<dbReference type="HAMAP" id="MF_01818">
    <property type="entry name" value="RNase_Z_BN"/>
    <property type="match status" value="1"/>
</dbReference>
<dbReference type="InterPro" id="IPR001279">
    <property type="entry name" value="Metallo-B-lactamas"/>
</dbReference>
<dbReference type="InterPro" id="IPR036866">
    <property type="entry name" value="RibonucZ/Hydroxyglut_hydro"/>
</dbReference>
<dbReference type="InterPro" id="IPR013471">
    <property type="entry name" value="RNase_Z/BN"/>
</dbReference>
<dbReference type="NCBIfam" id="NF000801">
    <property type="entry name" value="PRK00055.1-3"/>
    <property type="match status" value="1"/>
</dbReference>
<dbReference type="NCBIfam" id="TIGR02651">
    <property type="entry name" value="RNase_Z"/>
    <property type="match status" value="1"/>
</dbReference>
<dbReference type="PANTHER" id="PTHR46018">
    <property type="entry name" value="ZINC PHOSPHODIESTERASE ELAC PROTEIN 1"/>
    <property type="match status" value="1"/>
</dbReference>
<dbReference type="PANTHER" id="PTHR46018:SF2">
    <property type="entry name" value="ZINC PHOSPHODIESTERASE ELAC PROTEIN 1"/>
    <property type="match status" value="1"/>
</dbReference>
<dbReference type="Pfam" id="PF12706">
    <property type="entry name" value="Lactamase_B_2"/>
    <property type="match status" value="2"/>
</dbReference>
<dbReference type="SUPFAM" id="SSF56281">
    <property type="entry name" value="Metallo-hydrolase/oxidoreductase"/>
    <property type="match status" value="1"/>
</dbReference>